<gene>
    <name type="primary">Prpf38b</name>
</gene>
<protein>
    <recommendedName>
        <fullName>Pre-mRNA-splicing factor 38B</fullName>
    </recommendedName>
</protein>
<proteinExistence type="evidence at protein level"/>
<name>PR38B_RAT</name>
<dbReference type="EMBL" id="BC079264">
    <property type="protein sequence ID" value="AAH79264.1"/>
    <property type="molecule type" value="mRNA"/>
</dbReference>
<dbReference type="RefSeq" id="NP_001019476.1">
    <property type="nucleotide sequence ID" value="NM_001024305.2"/>
</dbReference>
<dbReference type="SMR" id="Q6AXY7"/>
<dbReference type="FunCoup" id="Q6AXY7">
    <property type="interactions" value="55"/>
</dbReference>
<dbReference type="STRING" id="10116.ENSRNOP00000027738"/>
<dbReference type="iPTMnet" id="Q6AXY7"/>
<dbReference type="PhosphoSitePlus" id="Q6AXY7"/>
<dbReference type="PaxDb" id="10116-ENSRNOP00000027738"/>
<dbReference type="Ensembl" id="ENSRNOT00000027738.6">
    <property type="protein sequence ID" value="ENSRNOP00000027738.4"/>
    <property type="gene ID" value="ENSRNOG00000020438.6"/>
</dbReference>
<dbReference type="GeneID" id="499691"/>
<dbReference type="KEGG" id="rno:499691"/>
<dbReference type="UCSC" id="RGD:1562940">
    <property type="organism name" value="rat"/>
</dbReference>
<dbReference type="AGR" id="RGD:1562940"/>
<dbReference type="CTD" id="55119"/>
<dbReference type="RGD" id="1562940">
    <property type="gene designation" value="Prpf38b"/>
</dbReference>
<dbReference type="eggNOG" id="KOG2888">
    <property type="taxonomic scope" value="Eukaryota"/>
</dbReference>
<dbReference type="GeneTree" id="ENSGT00730000111085"/>
<dbReference type="HOGENOM" id="CLU_034151_1_2_1"/>
<dbReference type="InParanoid" id="Q6AXY7"/>
<dbReference type="OMA" id="ERSHKHD"/>
<dbReference type="OrthoDB" id="3881at2759"/>
<dbReference type="TreeFam" id="TF313626"/>
<dbReference type="PRO" id="PR:Q6AXY7"/>
<dbReference type="Proteomes" id="UP000002494">
    <property type="component" value="Chromosome 2"/>
</dbReference>
<dbReference type="Bgee" id="ENSRNOG00000020438">
    <property type="expression patterns" value="Expressed in thymus and 20 other cell types or tissues"/>
</dbReference>
<dbReference type="GO" id="GO:0071011">
    <property type="term" value="C:precatalytic spliceosome"/>
    <property type="evidence" value="ECO:0000318"/>
    <property type="project" value="GO_Central"/>
</dbReference>
<dbReference type="GO" id="GO:0006397">
    <property type="term" value="P:mRNA processing"/>
    <property type="evidence" value="ECO:0007669"/>
    <property type="project" value="UniProtKB-KW"/>
</dbReference>
<dbReference type="GO" id="GO:0008380">
    <property type="term" value="P:RNA splicing"/>
    <property type="evidence" value="ECO:0007669"/>
    <property type="project" value="UniProtKB-KW"/>
</dbReference>
<dbReference type="InterPro" id="IPR005037">
    <property type="entry name" value="PRP38"/>
</dbReference>
<dbReference type="PANTHER" id="PTHR23142">
    <property type="entry name" value="PRE-MRNA-SPLICING FACTOR 38A-RELATED"/>
    <property type="match status" value="1"/>
</dbReference>
<dbReference type="Pfam" id="PF03371">
    <property type="entry name" value="PRP38"/>
    <property type="match status" value="1"/>
</dbReference>
<feature type="initiator methionine" description="Removed" evidence="1">
    <location>
        <position position="1"/>
    </location>
</feature>
<feature type="chain" id="PRO_0000287237" description="Pre-mRNA-splicing factor 38B">
    <location>
        <begin position="2"/>
        <end position="542"/>
    </location>
</feature>
<feature type="region of interest" description="Disordered" evidence="3">
    <location>
        <begin position="1"/>
        <end position="24"/>
    </location>
</feature>
<feature type="region of interest" description="Disordered" evidence="3">
    <location>
        <begin position="232"/>
        <end position="542"/>
    </location>
</feature>
<feature type="coiled-coil region" evidence="2">
    <location>
        <begin position="292"/>
        <end position="323"/>
    </location>
</feature>
<feature type="compositionally biased region" description="Polar residues" evidence="3">
    <location>
        <begin position="1"/>
        <end position="12"/>
    </location>
</feature>
<feature type="compositionally biased region" description="Low complexity" evidence="3">
    <location>
        <begin position="13"/>
        <end position="24"/>
    </location>
</feature>
<feature type="compositionally biased region" description="Basic and acidic residues" evidence="3">
    <location>
        <begin position="243"/>
        <end position="255"/>
    </location>
</feature>
<feature type="compositionally biased region" description="Basic residues" evidence="3">
    <location>
        <begin position="256"/>
        <end position="284"/>
    </location>
</feature>
<feature type="compositionally biased region" description="Basic and acidic residues" evidence="3">
    <location>
        <begin position="291"/>
        <end position="327"/>
    </location>
</feature>
<feature type="compositionally biased region" description="Basic residues" evidence="3">
    <location>
        <begin position="328"/>
        <end position="344"/>
    </location>
</feature>
<feature type="compositionally biased region" description="Basic and acidic residues" evidence="3">
    <location>
        <begin position="345"/>
        <end position="418"/>
    </location>
</feature>
<feature type="compositionally biased region" description="Basic residues" evidence="3">
    <location>
        <begin position="419"/>
        <end position="448"/>
    </location>
</feature>
<feature type="compositionally biased region" description="Basic and acidic residues" evidence="3">
    <location>
        <begin position="449"/>
        <end position="466"/>
    </location>
</feature>
<feature type="compositionally biased region" description="Basic and acidic residues" evidence="3">
    <location>
        <begin position="479"/>
        <end position="492"/>
    </location>
</feature>
<feature type="compositionally biased region" description="Basic and acidic residues" evidence="3">
    <location>
        <begin position="499"/>
        <end position="522"/>
    </location>
</feature>
<feature type="compositionally biased region" description="Basic and acidic residues" evidence="3">
    <location>
        <begin position="530"/>
        <end position="542"/>
    </location>
</feature>
<feature type="modified residue" description="N-acetylalanine" evidence="1">
    <location>
        <position position="2"/>
    </location>
</feature>
<feature type="modified residue" description="Phosphoserine" evidence="5">
    <location>
        <position position="5"/>
    </location>
</feature>
<feature type="modified residue" description="N6-acetyllysine" evidence="1">
    <location>
        <position position="227"/>
    </location>
</feature>
<feature type="modified residue" description="Phosphoserine" evidence="1">
    <location>
        <position position="288"/>
    </location>
</feature>
<feature type="modified residue" description="Phosphoserine" evidence="1">
    <location>
        <position position="290"/>
    </location>
</feature>
<feature type="modified residue" description="Phosphoserine" evidence="1">
    <location>
        <position position="318"/>
    </location>
</feature>
<feature type="modified residue" description="Phosphoserine" evidence="1">
    <location>
        <position position="320"/>
    </location>
</feature>
<feature type="modified residue" description="Phosphoserine" evidence="1">
    <location>
        <position position="446"/>
    </location>
</feature>
<feature type="modified residue" description="Phosphoserine" evidence="1">
    <location>
        <position position="471"/>
    </location>
</feature>
<feature type="modified residue" description="Phosphoserine" evidence="1">
    <location>
        <position position="473"/>
    </location>
</feature>
<feature type="modified residue" description="Phosphoserine" evidence="1">
    <location>
        <position position="479"/>
    </location>
</feature>
<feature type="modified residue" description="Phosphoserine" evidence="1">
    <location>
        <position position="523"/>
    </location>
</feature>
<feature type="modified residue" description="Phosphoserine" evidence="5">
    <location>
        <position position="525"/>
    </location>
</feature>
<feature type="modified residue" description="Phosphoserine" evidence="1">
    <location>
        <position position="530"/>
    </location>
</feature>
<keyword id="KW-0007">Acetylation</keyword>
<keyword id="KW-0175">Coiled coil</keyword>
<keyword id="KW-0507">mRNA processing</keyword>
<keyword id="KW-0508">mRNA splicing</keyword>
<keyword id="KW-0539">Nucleus</keyword>
<keyword id="KW-0597">Phosphoprotein</keyword>
<keyword id="KW-1185">Reference proteome</keyword>
<keyword id="KW-0747">Spliceosome</keyword>
<accession>Q6AXY7</accession>
<sequence length="542" mass="63932">MANNSPALTGNSQPQHQAAAAVVQQQQQCGGGGATKPAVSGKQGNVLPLWGNEKTMNLNPMILTNILSSPYFKVQLYELKTYHEVVDEIYFKVTHVEPWEKGSRKTAGQTGMCGGVRGVGTGGIVSTAFCLLYKLFTLKLTRKQVMGLITHTDSPYIRALGFMYIRYTQPPTDLWDWFESFLDDEEDLDVKAGGGCVMTIGEMLRSFLTKLEWFSTLFPRIPVPVQKNIDQQIKTRPRKIKKDGKEGVEEIDRHIERRRSRSPRRSLSPRRSPRRSRSRSHHRDGHGSSSFDRELEREKERQRLEREAKEREKERRRSRSLDRGLDRRRSRSRERHRSRSRSRDRKGDRRDRDREREKENERGRRRDRDYDKDRGNDRERDRERSRERSKEQRSRGEGEEKKHKEDKEDRRHRDDKKESKKKHSRSRSRERKHRSRSRSRNAGKRSRSRSKDKASKHKNESKEKSNKRSRSGSQGRTGSVEKRKREHSPSREKSRKRSRSQDRSHKRDHDSKDQSDRQDHQRSQSVEPESQEKEHKNKDETV</sequence>
<reference key="1">
    <citation type="journal article" date="2004" name="Genome Res.">
        <title>The status, quality, and expansion of the NIH full-length cDNA project: the Mammalian Gene Collection (MGC).</title>
        <authorList>
            <consortium name="The MGC Project Team"/>
        </authorList>
    </citation>
    <scope>NUCLEOTIDE SEQUENCE [LARGE SCALE MRNA]</scope>
    <source>
        <tissue>Testis</tissue>
    </source>
</reference>
<reference key="2">
    <citation type="journal article" date="2012" name="Nat. Commun.">
        <title>Quantitative maps of protein phosphorylation sites across 14 different rat organs and tissues.</title>
        <authorList>
            <person name="Lundby A."/>
            <person name="Secher A."/>
            <person name="Lage K."/>
            <person name="Nordsborg N.B."/>
            <person name="Dmytriyev A."/>
            <person name="Lundby C."/>
            <person name="Olsen J.V."/>
        </authorList>
    </citation>
    <scope>PHOSPHORYLATION [LARGE SCALE ANALYSIS] AT SER-5 AND SER-525</scope>
    <scope>IDENTIFICATION BY MASS SPECTROMETRY [LARGE SCALE ANALYSIS]</scope>
</reference>
<evidence type="ECO:0000250" key="1">
    <source>
        <dbReference type="UniProtKB" id="Q5VTL8"/>
    </source>
</evidence>
<evidence type="ECO:0000255" key="2"/>
<evidence type="ECO:0000256" key="3">
    <source>
        <dbReference type="SAM" id="MobiDB-lite"/>
    </source>
</evidence>
<evidence type="ECO:0000305" key="4"/>
<evidence type="ECO:0007744" key="5">
    <source>
    </source>
</evidence>
<organism>
    <name type="scientific">Rattus norvegicus</name>
    <name type="common">Rat</name>
    <dbReference type="NCBI Taxonomy" id="10116"/>
    <lineage>
        <taxon>Eukaryota</taxon>
        <taxon>Metazoa</taxon>
        <taxon>Chordata</taxon>
        <taxon>Craniata</taxon>
        <taxon>Vertebrata</taxon>
        <taxon>Euteleostomi</taxon>
        <taxon>Mammalia</taxon>
        <taxon>Eutheria</taxon>
        <taxon>Euarchontoglires</taxon>
        <taxon>Glires</taxon>
        <taxon>Rodentia</taxon>
        <taxon>Myomorpha</taxon>
        <taxon>Muroidea</taxon>
        <taxon>Muridae</taxon>
        <taxon>Murinae</taxon>
        <taxon>Rattus</taxon>
    </lineage>
</organism>
<comment type="function">
    <text evidence="4">May be required for pre-mRNA splicing.</text>
</comment>
<comment type="subcellular location">
    <subcellularLocation>
        <location evidence="4">Nucleus</location>
    </subcellularLocation>
</comment>
<comment type="similarity">
    <text evidence="4">Belongs to the PRP38 family.</text>
</comment>